<accession>Q50863</accession>
<gene>
    <name type="primary">rfbB</name>
</gene>
<evidence type="ECO:0000255" key="1">
    <source>
        <dbReference type="PROSITE-ProRule" id="PRU00434"/>
    </source>
</evidence>
<evidence type="ECO:0000305" key="2"/>
<protein>
    <recommendedName>
        <fullName>O-antigen export system ATP-binding protein RfbB</fullName>
    </recommendedName>
</protein>
<keyword id="KW-0067">ATP-binding</keyword>
<keyword id="KW-0997">Cell inner membrane</keyword>
<keyword id="KW-1003">Cell membrane</keyword>
<keyword id="KW-0472">Membrane</keyword>
<keyword id="KW-0547">Nucleotide-binding</keyword>
<keyword id="KW-0625">Polysaccharide transport</keyword>
<keyword id="KW-0762">Sugar transport</keyword>
<keyword id="KW-0813">Transport</keyword>
<reference key="1">
    <citation type="journal article" date="1996" name="J. Bacteriol.">
        <title>The Myxococcus xanthus rfbABC operon encodes an ATP-binding cassette transporter homolog required for O-antigen biosynthesis and multicellular development.</title>
        <authorList>
            <person name="Guo D."/>
            <person name="Bowden M.G."/>
            <person name="Pershad R."/>
            <person name="Kaplan H.B."/>
        </authorList>
    </citation>
    <scope>NUCLEOTIDE SEQUENCE [GENOMIC DNA]</scope>
    <source>
        <strain>DK6640</strain>
    </source>
</reference>
<organism>
    <name type="scientific">Myxococcus xanthus</name>
    <dbReference type="NCBI Taxonomy" id="34"/>
    <lineage>
        <taxon>Bacteria</taxon>
        <taxon>Pseudomonadati</taxon>
        <taxon>Myxococcota</taxon>
        <taxon>Myxococcia</taxon>
        <taxon>Myxococcales</taxon>
        <taxon>Cystobacterineae</taxon>
        <taxon>Myxococcaceae</taxon>
        <taxon>Myxococcus</taxon>
    </lineage>
</organism>
<sequence length="437" mass="47676">MPESMDAIILKDVVKSFRKRTIRGEYTTFKSELLRWLRGKRQSRDASLITALRGINLTIPKGKTVGIIGRNGSGKSTLLKLITGIYTPTSGDLQINGRISALLDLGAGFHPDFSGRENILINGIILGMTRAEVRARMDEIIAFSELGEFIDEPVRTYSSGMYMRLAFAVATHVDPDILIIDEILAVGDEHFSKKSLAKMMDFKRQGKTIVLVTHELGTVERWCDLAAWIDGGYVRRVGKPSEVTAEYREAISLAEAQSAAFTPPALTEGGGALPQVPSESLPAEGPVRIHRVQLLDARGESLEVLSPEEGLEVRADFSVEGPCEDVDFHVRLQAADGRTLYETSTRSEAVVLSRMPNPGVLRFVVERLGALGGDYSLVVSARASKGESSGRCAFRVVSATEEEGVFRPPHRWLVEPGANSQAGVRFEPGTSPRVEVG</sequence>
<proteinExistence type="inferred from homology"/>
<comment type="function">
    <text>May form an ATP-driven O-antigen export apparatus, in association with RfbA.</text>
</comment>
<comment type="subcellular location">
    <subcellularLocation>
        <location evidence="2">Cell inner membrane</location>
        <topology evidence="2">Peripheral membrane protein</topology>
    </subcellularLocation>
</comment>
<comment type="similarity">
    <text evidence="2">Belongs to the ABC transporter superfamily.</text>
</comment>
<name>RFBB_MYXXA</name>
<feature type="chain" id="PRO_0000092960" description="O-antigen export system ATP-binding protein RfbB">
    <location>
        <begin position="1"/>
        <end position="437"/>
    </location>
</feature>
<feature type="domain" description="ABC transporter" evidence="1">
    <location>
        <begin position="37"/>
        <end position="256"/>
    </location>
</feature>
<feature type="binding site" evidence="1">
    <location>
        <begin position="69"/>
        <end position="76"/>
    </location>
    <ligand>
        <name>ATP</name>
        <dbReference type="ChEBI" id="CHEBI:30616"/>
    </ligand>
</feature>
<dbReference type="EMBL" id="U36795">
    <property type="protein sequence ID" value="AAB05018.1"/>
    <property type="molecule type" value="Genomic_DNA"/>
</dbReference>
<dbReference type="PIR" id="T18555">
    <property type="entry name" value="T18555"/>
</dbReference>
<dbReference type="SMR" id="Q50863"/>
<dbReference type="TCDB" id="3.A.1.103.3">
    <property type="family name" value="the atp-binding cassette (abc) superfamily"/>
</dbReference>
<dbReference type="GO" id="GO:0005886">
    <property type="term" value="C:plasma membrane"/>
    <property type="evidence" value="ECO:0007669"/>
    <property type="project" value="UniProtKB-SubCell"/>
</dbReference>
<dbReference type="GO" id="GO:0140359">
    <property type="term" value="F:ABC-type transporter activity"/>
    <property type="evidence" value="ECO:0007669"/>
    <property type="project" value="InterPro"/>
</dbReference>
<dbReference type="GO" id="GO:0005524">
    <property type="term" value="F:ATP binding"/>
    <property type="evidence" value="ECO:0007669"/>
    <property type="project" value="UniProtKB-KW"/>
</dbReference>
<dbReference type="GO" id="GO:0016887">
    <property type="term" value="F:ATP hydrolysis activity"/>
    <property type="evidence" value="ECO:0007669"/>
    <property type="project" value="InterPro"/>
</dbReference>
<dbReference type="GO" id="GO:0015774">
    <property type="term" value="P:polysaccharide transport"/>
    <property type="evidence" value="ECO:0007669"/>
    <property type="project" value="UniProtKB-KW"/>
</dbReference>
<dbReference type="CDD" id="cd03220">
    <property type="entry name" value="ABC_KpsT_Wzt"/>
    <property type="match status" value="1"/>
</dbReference>
<dbReference type="CDD" id="cd10147">
    <property type="entry name" value="Wzt_C-like"/>
    <property type="match status" value="1"/>
</dbReference>
<dbReference type="Gene3D" id="2.70.50.60">
    <property type="entry name" value="abc- transporter (atp binding component) like domain"/>
    <property type="match status" value="1"/>
</dbReference>
<dbReference type="Gene3D" id="3.40.50.300">
    <property type="entry name" value="P-loop containing nucleotide triphosphate hydrolases"/>
    <property type="match status" value="1"/>
</dbReference>
<dbReference type="InterPro" id="IPR003593">
    <property type="entry name" value="AAA+_ATPase"/>
</dbReference>
<dbReference type="InterPro" id="IPR003439">
    <property type="entry name" value="ABC_transporter-like_ATP-bd"/>
</dbReference>
<dbReference type="InterPro" id="IPR015860">
    <property type="entry name" value="ABC_transpr_TagH-like"/>
</dbReference>
<dbReference type="InterPro" id="IPR050683">
    <property type="entry name" value="Bact_Polysacc_Export_ATP-bd"/>
</dbReference>
<dbReference type="InterPro" id="IPR027417">
    <property type="entry name" value="P-loop_NTPase"/>
</dbReference>
<dbReference type="InterPro" id="IPR029439">
    <property type="entry name" value="Wzt_C"/>
</dbReference>
<dbReference type="PANTHER" id="PTHR46743">
    <property type="entry name" value="TEICHOIC ACIDS EXPORT ATP-BINDING PROTEIN TAGH"/>
    <property type="match status" value="1"/>
</dbReference>
<dbReference type="PANTHER" id="PTHR46743:SF2">
    <property type="entry name" value="TEICHOIC ACIDS EXPORT ATP-BINDING PROTEIN TAGH"/>
    <property type="match status" value="1"/>
</dbReference>
<dbReference type="Pfam" id="PF00005">
    <property type="entry name" value="ABC_tran"/>
    <property type="match status" value="1"/>
</dbReference>
<dbReference type="Pfam" id="PF14524">
    <property type="entry name" value="Wzt_C"/>
    <property type="match status" value="1"/>
</dbReference>
<dbReference type="SMART" id="SM00382">
    <property type="entry name" value="AAA"/>
    <property type="match status" value="1"/>
</dbReference>
<dbReference type="SUPFAM" id="SSF52540">
    <property type="entry name" value="P-loop containing nucleoside triphosphate hydrolases"/>
    <property type="match status" value="1"/>
</dbReference>
<dbReference type="PROSITE" id="PS50893">
    <property type="entry name" value="ABC_TRANSPORTER_2"/>
    <property type="match status" value="1"/>
</dbReference>